<organism>
    <name type="scientific">Aspergillus terreus (strain NIH 2624 / FGSC A1156)</name>
    <dbReference type="NCBI Taxonomy" id="341663"/>
    <lineage>
        <taxon>Eukaryota</taxon>
        <taxon>Fungi</taxon>
        <taxon>Dikarya</taxon>
        <taxon>Ascomycota</taxon>
        <taxon>Pezizomycotina</taxon>
        <taxon>Eurotiomycetes</taxon>
        <taxon>Eurotiomycetidae</taxon>
        <taxon>Eurotiales</taxon>
        <taxon>Aspergillaceae</taxon>
        <taxon>Aspergillus</taxon>
        <taxon>Aspergillus subgen. Circumdati</taxon>
    </lineage>
</organism>
<accession>Q0CJ54</accession>
<accession>A0A2L0V397</accession>
<name>ATG_ASPTN</name>
<comment type="function">
    <text evidence="4 5 6 7 8">Cytochrome P450 monooxygenase; part of the gene cluster that mediates the biosynthesis of terreic acid, a quinone epoxide inhibitor of Bruton's tyrosine kinase (BTK) (PubMed:24534845, PubMed:25265334). The first step of the pathway is the synthesis of 6-methylsalicylic acid (6-MSA) by the 6-methylsalicylic acid synthase atX (PubMed:25265334, PubMed:29391515, PubMed:9003280, PubMed:9438344). In the biosynthesis of 6-MSA, atX utilizes one acetyl-CoA and three malonyl-CoAs as its substrates and catalyzes a series of programmed reactions including Claisen condensation, reduction, aldol cyclization, and the hydrolytic cleavage that yields 6-MSA (PubMed:25265334, PubMed:9003280, PubMed:9438344). The 6-methylsalicylate 1-monooxygenase atA then catalyzes the decarboxylative hydroxylation of 6-MSA to 3-methylcatechol (PubMed:25265334, PubMed:29391515). The next step is the conversion of 3-methylcatechol to 3-methyl-1,2,4-benzenetriol by cytochrome P450 monooxygenase atE, which is enhanced by cytochrome P450 monooxygenase atG (PubMed:25265334, PubMed:29391515). Then, the epoxidase atD catalyzes the epoxidation and hydroxyl oxidation of 3-methyl-1,2,4-benzenetriol to terremutin (PubMed:29391515). Lastly, GMC oxidoreductase atC oxidizes terremutin to terreic acid (PubMed:25265334, PubMed:29391515).</text>
</comment>
<comment type="cofactor">
    <cofactor evidence="1">
        <name>heme</name>
        <dbReference type="ChEBI" id="CHEBI:30413"/>
    </cofactor>
</comment>
<comment type="pathway">
    <text evidence="5 6">Secondary metabolite biosynthesis.</text>
</comment>
<comment type="disruption phenotype">
    <text evidence="5">Abolishes the production of terreic acid.</text>
</comment>
<comment type="biotechnology">
    <text evidence="2 3">Terreic acid is a metabolite with antibiotic properties (PubMed:23686727). Terreic acid also acts as a selective inhibitor of human Bruton's tyrosine kinase in mast cells and other immune cells (PubMed:10051623).</text>
</comment>
<comment type="similarity">
    <text evidence="11">Belongs to the cytochrome P450 family.</text>
</comment>
<comment type="caution">
    <text evidence="5 6">Was originally thought to convert 3-methylcatechol directly to terremutin (PubMed:25265334). However, was later shown that this is not the case and that atG is likely to assist atE in the conversion of 3-methylcatechol to 3-methyl-1,2,4-benzenetriol (PubMed:29391515).</text>
</comment>
<comment type="sequence caution" evidence="11">
    <conflict type="erroneous gene model prediction">
        <sequence resource="EMBL-CDS" id="EAU32824"/>
    </conflict>
</comment>
<dbReference type="EC" id="1.-.-.-" evidence="5"/>
<dbReference type="EMBL" id="KY950683">
    <property type="protein sequence ID" value="AUZ97940.1"/>
    <property type="molecule type" value="mRNA"/>
</dbReference>
<dbReference type="EMBL" id="CH476602">
    <property type="protein sequence ID" value="EAU32824.1"/>
    <property type="status" value="ALT_SEQ"/>
    <property type="molecule type" value="Genomic_DNA"/>
</dbReference>
<dbReference type="RefSeq" id="XP_001215458.1">
    <property type="nucleotide sequence ID" value="XM_001215458.1"/>
</dbReference>
<dbReference type="STRING" id="341663.Q0CJ54"/>
<dbReference type="EnsemblFungi" id="EAU32824">
    <property type="protein sequence ID" value="EAU32824"/>
    <property type="gene ID" value="ATEG_06280"/>
</dbReference>
<dbReference type="GeneID" id="4322429"/>
<dbReference type="VEuPathDB" id="FungiDB:ATEG_06280"/>
<dbReference type="eggNOG" id="KOG0159">
    <property type="taxonomic scope" value="Eukaryota"/>
</dbReference>
<dbReference type="HOGENOM" id="CLU_001570_19_1_1"/>
<dbReference type="OMA" id="LAYCEIN"/>
<dbReference type="OrthoDB" id="3945418at2759"/>
<dbReference type="Proteomes" id="UP000007963">
    <property type="component" value="Unassembled WGS sequence"/>
</dbReference>
<dbReference type="GO" id="GO:0020037">
    <property type="term" value="F:heme binding"/>
    <property type="evidence" value="ECO:0007669"/>
    <property type="project" value="InterPro"/>
</dbReference>
<dbReference type="GO" id="GO:0005506">
    <property type="term" value="F:iron ion binding"/>
    <property type="evidence" value="ECO:0007669"/>
    <property type="project" value="InterPro"/>
</dbReference>
<dbReference type="GO" id="GO:0004497">
    <property type="term" value="F:monooxygenase activity"/>
    <property type="evidence" value="ECO:0007669"/>
    <property type="project" value="UniProtKB-KW"/>
</dbReference>
<dbReference type="GO" id="GO:0016705">
    <property type="term" value="F:oxidoreductase activity, acting on paired donors, with incorporation or reduction of molecular oxygen"/>
    <property type="evidence" value="ECO:0007669"/>
    <property type="project" value="InterPro"/>
</dbReference>
<dbReference type="Gene3D" id="1.10.630.10">
    <property type="entry name" value="Cytochrome P450"/>
    <property type="match status" value="1"/>
</dbReference>
<dbReference type="InterPro" id="IPR001128">
    <property type="entry name" value="Cyt_P450"/>
</dbReference>
<dbReference type="InterPro" id="IPR002401">
    <property type="entry name" value="Cyt_P450_E_grp-I"/>
</dbReference>
<dbReference type="InterPro" id="IPR036396">
    <property type="entry name" value="Cyt_P450_sf"/>
</dbReference>
<dbReference type="InterPro" id="IPR050121">
    <property type="entry name" value="Cytochrome_P450_monoxygenase"/>
</dbReference>
<dbReference type="PANTHER" id="PTHR24305">
    <property type="entry name" value="CYTOCHROME P450"/>
    <property type="match status" value="1"/>
</dbReference>
<dbReference type="PANTHER" id="PTHR24305:SF166">
    <property type="entry name" value="CYTOCHROME P450 12A4, MITOCHONDRIAL-RELATED"/>
    <property type="match status" value="1"/>
</dbReference>
<dbReference type="Pfam" id="PF00067">
    <property type="entry name" value="p450"/>
    <property type="match status" value="1"/>
</dbReference>
<dbReference type="PRINTS" id="PR00463">
    <property type="entry name" value="EP450I"/>
</dbReference>
<dbReference type="SUPFAM" id="SSF48264">
    <property type="entry name" value="Cytochrome P450"/>
    <property type="match status" value="1"/>
</dbReference>
<gene>
    <name evidence="9" type="primary">atG</name>
    <name type="ORF">ATEG_06280</name>
</gene>
<sequence>MISSVPYRERQSIGGIRSCPHSPASSRFPRVNDSAPTVFQGWDVPIGTPISMNIWNTHYNKDFFPGPTEFWPERWMGEGTRELEKYLVPFGSGSRMCTGQNLSIAEQVLTIATLFRNYELELYQTTKKNVVMASYCMISLPGSESPGIQVKVRKTVQ</sequence>
<feature type="chain" id="PRO_0000437642" description="Cytochrome P450 monooxygenase atG">
    <location>
        <begin position="1"/>
        <end position="157"/>
    </location>
</feature>
<feature type="binding site" description="axial binding residue" evidence="1">
    <location>
        <position position="97"/>
    </location>
    <ligand>
        <name>heme</name>
        <dbReference type="ChEBI" id="CHEBI:30413"/>
    </ligand>
    <ligandPart>
        <name>Fe</name>
        <dbReference type="ChEBI" id="CHEBI:18248"/>
    </ligandPart>
</feature>
<proteinExistence type="evidence at protein level"/>
<reference key="1">
    <citation type="journal article" date="2018" name="Sci. Rep.">
        <title>Heterologous pathway assembly reveals molecular steps of fungal terreic acid biosynthesis.</title>
        <authorList>
            <person name="Kong C."/>
            <person name="Huang H."/>
            <person name="Xue Y."/>
            <person name="Liu Y."/>
            <person name="Peng Q."/>
            <person name="Liu Q."/>
            <person name="Xu Q."/>
            <person name="Zhu Q."/>
            <person name="Yin Y."/>
            <person name="Zhou X."/>
            <person name="Zhang Y."/>
            <person name="Cai M."/>
        </authorList>
    </citation>
    <scope>NUCLEOTIDE SEQUENCE [MRNA]</scope>
    <scope>FUNCTION</scope>
    <scope>PATHWAY</scope>
    <source>
        <strain evidence="10">NIH 2624 / FGSC A1156</strain>
    </source>
</reference>
<reference key="2">
    <citation type="submission" date="2005-09" db="EMBL/GenBank/DDBJ databases">
        <title>Annotation of the Aspergillus terreus NIH2624 genome.</title>
        <authorList>
            <person name="Birren B.W."/>
            <person name="Lander E.S."/>
            <person name="Galagan J.E."/>
            <person name="Nusbaum C."/>
            <person name="Devon K."/>
            <person name="Henn M."/>
            <person name="Ma L.-J."/>
            <person name="Jaffe D.B."/>
            <person name="Butler J."/>
            <person name="Alvarez P."/>
            <person name="Gnerre S."/>
            <person name="Grabherr M."/>
            <person name="Kleber M."/>
            <person name="Mauceli E.W."/>
            <person name="Brockman W."/>
            <person name="Rounsley S."/>
            <person name="Young S.K."/>
            <person name="LaButti K."/>
            <person name="Pushparaj V."/>
            <person name="DeCaprio D."/>
            <person name="Crawford M."/>
            <person name="Koehrsen M."/>
            <person name="Engels R."/>
            <person name="Montgomery P."/>
            <person name="Pearson M."/>
            <person name="Howarth C."/>
            <person name="Larson L."/>
            <person name="Luoma S."/>
            <person name="White J."/>
            <person name="Alvarado L."/>
            <person name="Kodira C.D."/>
            <person name="Zeng Q."/>
            <person name="Oleary S."/>
            <person name="Yandava C."/>
            <person name="Denning D.W."/>
            <person name="Nierman W.C."/>
            <person name="Milne T."/>
            <person name="Madden K."/>
        </authorList>
    </citation>
    <scope>NUCLEOTIDE SEQUENCE [LARGE SCALE GENOMIC DNA]</scope>
    <source>
        <strain>NIH 2624 / FGSC A1156</strain>
    </source>
</reference>
<reference key="3">
    <citation type="journal article" date="1996" name="Mol. Gen. Genet.">
        <title>Cloning of the polyketide synthase gene atX from Aspergillus terreus and its identification as the 6-methylsalicylic acid synthase gene by heterologous expression.</title>
        <authorList>
            <person name="Fujii I."/>
            <person name="Ono Y."/>
            <person name="Tada H."/>
            <person name="Gomi K."/>
            <person name="Ebizuka Y."/>
            <person name="Sankawa U."/>
        </authorList>
    </citation>
    <scope>FUNCTION</scope>
</reference>
<reference key="4">
    <citation type="journal article" date="1997" name="Folia Microbiol. (Praha)">
        <title>Polyketide synthase gene pksM from Aspergillus terreus expressed during growth phase.</title>
        <authorList>
            <person name="Pazoutova S."/>
            <person name="Linka M."/>
            <person name="Storkova S."/>
            <person name="Schwab H."/>
        </authorList>
    </citation>
    <scope>FUNCTION</scope>
</reference>
<reference key="5">
    <citation type="journal article" date="1999" name="Proc. Natl. Acad. Sci. U.S.A.">
        <title>Terreic acid, a quinone epoxide inhibitor of Bruton's tyrosine kinase.</title>
        <authorList>
            <person name="Kawakami Y."/>
            <person name="Hartman S.E."/>
            <person name="Kinoshita E."/>
            <person name="Suzuki H."/>
            <person name="Kitaura J."/>
            <person name="Yao L."/>
            <person name="Inagaki N."/>
            <person name="Franco A."/>
            <person name="Hata D."/>
            <person name="Maeda-Yamamoto M."/>
            <person name="Fukamachi H."/>
            <person name="Nagai H."/>
            <person name="Kawakami T."/>
        </authorList>
    </citation>
    <scope>BIOTECHNOLOGY</scope>
</reference>
<reference key="6">
    <citation type="journal article" date="2014" name="J. Basic Microbiol.">
        <title>Differential antibacterial properties of the MurA inhibitors terreic acid and fosfomycin.</title>
        <authorList>
            <person name="Olesen S.H."/>
            <person name="Ingles D.J."/>
            <person name="Yang Y."/>
            <person name="Schoenbrunn E."/>
        </authorList>
    </citation>
    <scope>BIOTECHNOLOGY</scope>
</reference>
<reference key="7">
    <citation type="journal article" date="2014" name="J. Biotechnol.">
        <title>Culture-based and sequence-based insights into biosynthesis of secondary metabolites by Aspergillus terreus ATCC 20542.</title>
        <authorList>
            <person name="Boruta T."/>
            <person name="Bizukojc M."/>
        </authorList>
    </citation>
    <scope>FUNCTION</scope>
</reference>
<reference key="8">
    <citation type="journal article" date="2014" name="Org. Lett.">
        <title>Molecular genetic characterization of terreic acid pathway in Aspergillus terreus.</title>
        <authorList>
            <person name="Guo C.J."/>
            <person name="Sun W.W."/>
            <person name="Bruno K.S."/>
            <person name="Wang C.C."/>
        </authorList>
    </citation>
    <scope>FUNCTION</scope>
    <scope>DISRUPTION PHENOTYPE</scope>
</reference>
<protein>
    <recommendedName>
        <fullName evidence="9">Cytochrome P450 monooxygenase atG</fullName>
        <ecNumber evidence="5">1.-.-.-</ecNumber>
    </recommendedName>
    <alternativeName>
        <fullName evidence="9">Terreic acid biosynthesis cluster protein G</fullName>
    </alternativeName>
</protein>
<keyword id="KW-0349">Heme</keyword>
<keyword id="KW-0408">Iron</keyword>
<keyword id="KW-0479">Metal-binding</keyword>
<keyword id="KW-0503">Monooxygenase</keyword>
<keyword id="KW-0560">Oxidoreductase</keyword>
<keyword id="KW-1185">Reference proteome</keyword>
<evidence type="ECO:0000250" key="1">
    <source>
        <dbReference type="UniProtKB" id="P04798"/>
    </source>
</evidence>
<evidence type="ECO:0000269" key="2">
    <source>
    </source>
</evidence>
<evidence type="ECO:0000269" key="3">
    <source>
    </source>
</evidence>
<evidence type="ECO:0000269" key="4">
    <source>
    </source>
</evidence>
<evidence type="ECO:0000269" key="5">
    <source>
    </source>
</evidence>
<evidence type="ECO:0000269" key="6">
    <source>
    </source>
</evidence>
<evidence type="ECO:0000269" key="7">
    <source>
    </source>
</evidence>
<evidence type="ECO:0000269" key="8">
    <source>
    </source>
</evidence>
<evidence type="ECO:0000303" key="9">
    <source>
    </source>
</evidence>
<evidence type="ECO:0000303" key="10">
    <source>
    </source>
</evidence>
<evidence type="ECO:0000305" key="11"/>